<feature type="chain" id="PRO_0000174242" description="Odorant receptor 42a">
    <location>
        <begin position="1"/>
        <end position="406"/>
    </location>
</feature>
<feature type="topological domain" description="Cytoplasmic" evidence="2">
    <location>
        <begin position="1"/>
        <end position="44"/>
    </location>
</feature>
<feature type="transmembrane region" description="Helical; Name=1" evidence="2">
    <location>
        <begin position="45"/>
        <end position="65"/>
    </location>
</feature>
<feature type="topological domain" description="Extracellular" evidence="2">
    <location>
        <begin position="66"/>
        <end position="86"/>
    </location>
</feature>
<feature type="transmembrane region" description="Helical; Name=2" evidence="2">
    <location>
        <begin position="87"/>
        <end position="107"/>
    </location>
</feature>
<feature type="topological domain" description="Cytoplasmic" evidence="2">
    <location>
        <begin position="108"/>
        <end position="142"/>
    </location>
</feature>
<feature type="transmembrane region" description="Helical; Name=3" evidence="2">
    <location>
        <begin position="143"/>
        <end position="163"/>
    </location>
</feature>
<feature type="topological domain" description="Extracellular" evidence="2">
    <location>
        <begin position="164"/>
        <end position="181"/>
    </location>
</feature>
<feature type="transmembrane region" description="Helical; Name=4" evidence="2">
    <location>
        <begin position="182"/>
        <end position="202"/>
    </location>
</feature>
<feature type="topological domain" description="Cytoplasmic" evidence="2">
    <location>
        <begin position="203"/>
        <end position="271"/>
    </location>
</feature>
<feature type="transmembrane region" description="Helical; Name=5" evidence="2">
    <location>
        <begin position="272"/>
        <end position="292"/>
    </location>
</feature>
<feature type="topological domain" description="Extracellular" evidence="2">
    <location>
        <begin position="293"/>
        <end position="298"/>
    </location>
</feature>
<feature type="transmembrane region" description="Helical; Name=6" evidence="2">
    <location>
        <begin position="299"/>
        <end position="319"/>
    </location>
</feature>
<feature type="topological domain" description="Cytoplasmic" evidence="2">
    <location>
        <begin position="320"/>
        <end position="359"/>
    </location>
</feature>
<feature type="transmembrane region" description="Helical; Name=7" evidence="2">
    <location>
        <begin position="360"/>
        <end position="380"/>
    </location>
</feature>
<feature type="topological domain" description="Extracellular" evidence="2">
    <location>
        <begin position="381"/>
        <end position="406"/>
    </location>
</feature>
<feature type="glycosylation site" description="N-linked (GlcNAc...) asparagine" evidence="2">
    <location>
        <position position="394"/>
    </location>
</feature>
<organism>
    <name type="scientific">Drosophila melanogaster</name>
    <name type="common">Fruit fly</name>
    <dbReference type="NCBI Taxonomy" id="7227"/>
    <lineage>
        <taxon>Eukaryota</taxon>
        <taxon>Metazoa</taxon>
        <taxon>Ecdysozoa</taxon>
        <taxon>Arthropoda</taxon>
        <taxon>Hexapoda</taxon>
        <taxon>Insecta</taxon>
        <taxon>Pterygota</taxon>
        <taxon>Neoptera</taxon>
        <taxon>Endopterygota</taxon>
        <taxon>Diptera</taxon>
        <taxon>Brachycera</taxon>
        <taxon>Muscomorpha</taxon>
        <taxon>Ephydroidea</taxon>
        <taxon>Drosophilidae</taxon>
        <taxon>Drosophila</taxon>
        <taxon>Sophophora</taxon>
    </lineage>
</organism>
<dbReference type="EMBL" id="AE013599">
    <property type="protein sequence ID" value="AAF57307.2"/>
    <property type="molecule type" value="Genomic_DNA"/>
</dbReference>
<dbReference type="EMBL" id="BT024437">
    <property type="protein sequence ID" value="ABC86499.1"/>
    <property type="status" value="ALT_INIT"/>
    <property type="molecule type" value="mRNA"/>
</dbReference>
<dbReference type="RefSeq" id="NP_523622.2">
    <property type="nucleotide sequence ID" value="NM_078898.3"/>
</dbReference>
<dbReference type="SMR" id="Q9V9I2"/>
<dbReference type="BioGRID" id="61420">
    <property type="interactions" value="2"/>
</dbReference>
<dbReference type="DIP" id="DIP-22609N"/>
<dbReference type="FunCoup" id="Q9V9I2">
    <property type="interactions" value="41"/>
</dbReference>
<dbReference type="IntAct" id="Q9V9I2">
    <property type="interactions" value="1"/>
</dbReference>
<dbReference type="STRING" id="7227.FBpp0085388"/>
<dbReference type="GlyCosmos" id="Q9V9I2">
    <property type="glycosylation" value="1 site, No reported glycans"/>
</dbReference>
<dbReference type="GlyGen" id="Q9V9I2">
    <property type="glycosylation" value="1 site"/>
</dbReference>
<dbReference type="PaxDb" id="7227-FBpp0085388"/>
<dbReference type="DNASU" id="35514"/>
<dbReference type="EnsemblMetazoa" id="FBtr0086052">
    <property type="protein sequence ID" value="FBpp0085388"/>
    <property type="gene ID" value="FBgn0033041"/>
</dbReference>
<dbReference type="GeneID" id="35514"/>
<dbReference type="KEGG" id="dme:Dmel_CG17250"/>
<dbReference type="AGR" id="FB:FBgn0033041"/>
<dbReference type="CTD" id="35514"/>
<dbReference type="FlyBase" id="FBgn0033041">
    <property type="gene designation" value="Or42a"/>
</dbReference>
<dbReference type="VEuPathDB" id="VectorBase:FBgn0033041"/>
<dbReference type="eggNOG" id="ENOG502TAX9">
    <property type="taxonomic scope" value="Eukaryota"/>
</dbReference>
<dbReference type="GeneTree" id="ENSGT00540000073151"/>
<dbReference type="HOGENOM" id="CLU_033399_8_0_1"/>
<dbReference type="InParanoid" id="Q9V9I2"/>
<dbReference type="OMA" id="FQNYYPF"/>
<dbReference type="OrthoDB" id="6604226at2759"/>
<dbReference type="PhylomeDB" id="Q9V9I2"/>
<dbReference type="BioGRID-ORCS" id="35514">
    <property type="hits" value="0 hits in 1 CRISPR screen"/>
</dbReference>
<dbReference type="GenomeRNAi" id="35514"/>
<dbReference type="PRO" id="PR:Q9V9I2"/>
<dbReference type="Proteomes" id="UP000000803">
    <property type="component" value="Chromosome 2R"/>
</dbReference>
<dbReference type="Bgee" id="FBgn0033041">
    <property type="expression patterns" value="Expressed in maxillary palp olfactory receptor neuron (Drosophila) in proboscis and 3 other cell types or tissues"/>
</dbReference>
<dbReference type="GO" id="GO:0034703">
    <property type="term" value="C:cation channel complex"/>
    <property type="evidence" value="ECO:0000250"/>
    <property type="project" value="FlyBase"/>
</dbReference>
<dbReference type="GO" id="GO:0032590">
    <property type="term" value="C:dendrite membrane"/>
    <property type="evidence" value="ECO:0000250"/>
    <property type="project" value="FlyBase"/>
</dbReference>
<dbReference type="GO" id="GO:0005886">
    <property type="term" value="C:plasma membrane"/>
    <property type="evidence" value="ECO:0000250"/>
    <property type="project" value="FlyBase"/>
</dbReference>
<dbReference type="GO" id="GO:0170020">
    <property type="term" value="F:ionotropic olfactory receptor activity"/>
    <property type="evidence" value="ECO:0000250"/>
    <property type="project" value="FlyBase"/>
</dbReference>
<dbReference type="GO" id="GO:0005549">
    <property type="term" value="F:odorant binding"/>
    <property type="evidence" value="ECO:0000250"/>
    <property type="project" value="FlyBase"/>
</dbReference>
<dbReference type="GO" id="GO:0004984">
    <property type="term" value="F:olfactory receptor activity"/>
    <property type="evidence" value="ECO:0000318"/>
    <property type="project" value="GO_Central"/>
</dbReference>
<dbReference type="GO" id="GO:0050911">
    <property type="term" value="P:detection of chemical stimulus involved in sensory perception of smell"/>
    <property type="evidence" value="ECO:0000315"/>
    <property type="project" value="FlyBase"/>
</dbReference>
<dbReference type="GO" id="GO:0042048">
    <property type="term" value="P:olfactory behavior"/>
    <property type="evidence" value="ECO:0000315"/>
    <property type="project" value="FlyBase"/>
</dbReference>
<dbReference type="GO" id="GO:0007165">
    <property type="term" value="P:signal transduction"/>
    <property type="evidence" value="ECO:0007669"/>
    <property type="project" value="UniProtKB-KW"/>
</dbReference>
<dbReference type="InterPro" id="IPR004117">
    <property type="entry name" value="7tm6_olfct_rcpt"/>
</dbReference>
<dbReference type="PANTHER" id="PTHR21137">
    <property type="entry name" value="ODORANT RECEPTOR"/>
    <property type="match status" value="1"/>
</dbReference>
<dbReference type="PANTHER" id="PTHR21137:SF35">
    <property type="entry name" value="ODORANT RECEPTOR 19A-RELATED"/>
    <property type="match status" value="1"/>
</dbReference>
<dbReference type="Pfam" id="PF02949">
    <property type="entry name" value="7tm_6"/>
    <property type="match status" value="1"/>
</dbReference>
<proteinExistence type="evidence at transcript level"/>
<sequence>MDLRRWFPTLYTQSKDSPVRSRDATLYLLRCVFLMGVRKPPAKFFVAYVLWSFALNFCSTFYQPIGFLTGYISHLSEFSPGEFLTSLQVAFNAWSCSTKVLIVWALVKRFDEANNLLDEMDRRITDPGERLQIHRAVSLSNRIFFFFMAVYMVYATNTFLSAIFIGRPPYQNYYPFLDWRSSTLHLALQAGLEYFAMAGACFQDVCVDCYPVNFVLVLRAHMSIFAERLRRLGTYPYESQEQKYERLVQCIQDHKVILRFVDCLRPVISGTIFVQFLVVGLVLGFTLINIVLFANLGSAIAALSFMAAVLLETTPFCILCNYLTEDCYKLADALFQSNWIDEEKRYQKTLMYFLQKLQQPITFMAMNVFPISVGTNISVTKFSFSVFTLVKQMNISEKLAKSEMEE</sequence>
<comment type="function">
    <text evidence="3 4">Odorant receptor which mediates acceptance or avoidance behavior, depending on its substrates. The odorant receptor repertoire encodes a large collection of odor stimuli that vary widely in identity, intensity, and duration. May form a complex with Orco to form odorant-sensing units, providing sensitive and prolonged odorant signaling and calcium permeability. Involved in the behavioral responses to butanol, ethyl acetate, propyl acetate, and pentyl acetate. Also responds to pyrazines.</text>
</comment>
<comment type="subunit">
    <text evidence="1">Interacts with Orco. Complexes exist early in the endomembrane system in olfactory sensory neurons (OSNs), coupling these complexes to the conserved ciliary trafficking pathway (By similarity).</text>
</comment>
<comment type="subcellular location">
    <subcellularLocation>
        <location evidence="1">Cell membrane</location>
        <topology evidence="1">Multi-pass membrane protein</topology>
    </subcellularLocation>
</comment>
<comment type="miscellaneous">
    <text>The atypical heteromeric and topological design of the odorant receptors appears to be an insect-specific solution for odor recognition, making the OR/Orco complex an attractive target for the development of highly selective insect repellents to disrupt olfactory-mediated host-seeking behaviors of insect disease vectors. Odor-evoked OR currents are independent of known G-protein-coupled second messenger pathways.</text>
</comment>
<comment type="similarity">
    <text evidence="5">Belongs to the insect chemoreceptor superfamily. Heteromeric odorant receptor channel (TC 1.A.69) family. Or2a subfamily.</text>
</comment>
<comment type="sequence caution" evidence="5">
    <conflict type="erroneous initiation">
        <sequence resource="EMBL-CDS" id="ABC86499"/>
    </conflict>
</comment>
<protein>
    <recommendedName>
        <fullName>Odorant receptor 42a</fullName>
    </recommendedName>
</protein>
<accession>Q9V9I2</accession>
<accession>Q29QF3</accession>
<reference key="1">
    <citation type="journal article" date="2000" name="Science">
        <title>The genome sequence of Drosophila melanogaster.</title>
        <authorList>
            <person name="Adams M.D."/>
            <person name="Celniker S.E."/>
            <person name="Holt R.A."/>
            <person name="Evans C.A."/>
            <person name="Gocayne J.D."/>
            <person name="Amanatides P.G."/>
            <person name="Scherer S.E."/>
            <person name="Li P.W."/>
            <person name="Hoskins R.A."/>
            <person name="Galle R.F."/>
            <person name="George R.A."/>
            <person name="Lewis S.E."/>
            <person name="Richards S."/>
            <person name="Ashburner M."/>
            <person name="Henderson S.N."/>
            <person name="Sutton G.G."/>
            <person name="Wortman J.R."/>
            <person name="Yandell M.D."/>
            <person name="Zhang Q."/>
            <person name="Chen L.X."/>
            <person name="Brandon R.C."/>
            <person name="Rogers Y.-H.C."/>
            <person name="Blazej R.G."/>
            <person name="Champe M."/>
            <person name="Pfeiffer B.D."/>
            <person name="Wan K.H."/>
            <person name="Doyle C."/>
            <person name="Baxter E.G."/>
            <person name="Helt G."/>
            <person name="Nelson C.R."/>
            <person name="Miklos G.L.G."/>
            <person name="Abril J.F."/>
            <person name="Agbayani A."/>
            <person name="An H.-J."/>
            <person name="Andrews-Pfannkoch C."/>
            <person name="Baldwin D."/>
            <person name="Ballew R.M."/>
            <person name="Basu A."/>
            <person name="Baxendale J."/>
            <person name="Bayraktaroglu L."/>
            <person name="Beasley E.M."/>
            <person name="Beeson K.Y."/>
            <person name="Benos P.V."/>
            <person name="Berman B.P."/>
            <person name="Bhandari D."/>
            <person name="Bolshakov S."/>
            <person name="Borkova D."/>
            <person name="Botchan M.R."/>
            <person name="Bouck J."/>
            <person name="Brokstein P."/>
            <person name="Brottier P."/>
            <person name="Burtis K.C."/>
            <person name="Busam D.A."/>
            <person name="Butler H."/>
            <person name="Cadieu E."/>
            <person name="Center A."/>
            <person name="Chandra I."/>
            <person name="Cherry J.M."/>
            <person name="Cawley S."/>
            <person name="Dahlke C."/>
            <person name="Davenport L.B."/>
            <person name="Davies P."/>
            <person name="de Pablos B."/>
            <person name="Delcher A."/>
            <person name="Deng Z."/>
            <person name="Mays A.D."/>
            <person name="Dew I."/>
            <person name="Dietz S.M."/>
            <person name="Dodson K."/>
            <person name="Doup L.E."/>
            <person name="Downes M."/>
            <person name="Dugan-Rocha S."/>
            <person name="Dunkov B.C."/>
            <person name="Dunn P."/>
            <person name="Durbin K.J."/>
            <person name="Evangelista C.C."/>
            <person name="Ferraz C."/>
            <person name="Ferriera S."/>
            <person name="Fleischmann W."/>
            <person name="Fosler C."/>
            <person name="Gabrielian A.E."/>
            <person name="Garg N.S."/>
            <person name="Gelbart W.M."/>
            <person name="Glasser K."/>
            <person name="Glodek A."/>
            <person name="Gong F."/>
            <person name="Gorrell J.H."/>
            <person name="Gu Z."/>
            <person name="Guan P."/>
            <person name="Harris M."/>
            <person name="Harris N.L."/>
            <person name="Harvey D.A."/>
            <person name="Heiman T.J."/>
            <person name="Hernandez J.R."/>
            <person name="Houck J."/>
            <person name="Hostin D."/>
            <person name="Houston K.A."/>
            <person name="Howland T.J."/>
            <person name="Wei M.-H."/>
            <person name="Ibegwam C."/>
            <person name="Jalali M."/>
            <person name="Kalush F."/>
            <person name="Karpen G.H."/>
            <person name="Ke Z."/>
            <person name="Kennison J.A."/>
            <person name="Ketchum K.A."/>
            <person name="Kimmel B.E."/>
            <person name="Kodira C.D."/>
            <person name="Kraft C.L."/>
            <person name="Kravitz S."/>
            <person name="Kulp D."/>
            <person name="Lai Z."/>
            <person name="Lasko P."/>
            <person name="Lei Y."/>
            <person name="Levitsky A.A."/>
            <person name="Li J.H."/>
            <person name="Li Z."/>
            <person name="Liang Y."/>
            <person name="Lin X."/>
            <person name="Liu X."/>
            <person name="Mattei B."/>
            <person name="McIntosh T.C."/>
            <person name="McLeod M.P."/>
            <person name="McPherson D."/>
            <person name="Merkulov G."/>
            <person name="Milshina N.V."/>
            <person name="Mobarry C."/>
            <person name="Morris J."/>
            <person name="Moshrefi A."/>
            <person name="Mount S.M."/>
            <person name="Moy M."/>
            <person name="Murphy B."/>
            <person name="Murphy L."/>
            <person name="Muzny D.M."/>
            <person name="Nelson D.L."/>
            <person name="Nelson D.R."/>
            <person name="Nelson K.A."/>
            <person name="Nixon K."/>
            <person name="Nusskern D.R."/>
            <person name="Pacleb J.M."/>
            <person name="Palazzolo M."/>
            <person name="Pittman G.S."/>
            <person name="Pan S."/>
            <person name="Pollard J."/>
            <person name="Puri V."/>
            <person name="Reese M.G."/>
            <person name="Reinert K."/>
            <person name="Remington K."/>
            <person name="Saunders R.D.C."/>
            <person name="Scheeler F."/>
            <person name="Shen H."/>
            <person name="Shue B.C."/>
            <person name="Siden-Kiamos I."/>
            <person name="Simpson M."/>
            <person name="Skupski M.P."/>
            <person name="Smith T.J."/>
            <person name="Spier E."/>
            <person name="Spradling A.C."/>
            <person name="Stapleton M."/>
            <person name="Strong R."/>
            <person name="Sun E."/>
            <person name="Svirskas R."/>
            <person name="Tector C."/>
            <person name="Turner R."/>
            <person name="Venter E."/>
            <person name="Wang A.H."/>
            <person name="Wang X."/>
            <person name="Wang Z.-Y."/>
            <person name="Wassarman D.A."/>
            <person name="Weinstock G.M."/>
            <person name="Weissenbach J."/>
            <person name="Williams S.M."/>
            <person name="Woodage T."/>
            <person name="Worley K.C."/>
            <person name="Wu D."/>
            <person name="Yang S."/>
            <person name="Yao Q.A."/>
            <person name="Ye J."/>
            <person name="Yeh R.-F."/>
            <person name="Zaveri J.S."/>
            <person name="Zhan M."/>
            <person name="Zhang G."/>
            <person name="Zhao Q."/>
            <person name="Zheng L."/>
            <person name="Zheng X.H."/>
            <person name="Zhong F.N."/>
            <person name="Zhong W."/>
            <person name="Zhou X."/>
            <person name="Zhu S.C."/>
            <person name="Zhu X."/>
            <person name="Smith H.O."/>
            <person name="Gibbs R.A."/>
            <person name="Myers E.W."/>
            <person name="Rubin G.M."/>
            <person name="Venter J.C."/>
        </authorList>
    </citation>
    <scope>NUCLEOTIDE SEQUENCE [LARGE SCALE GENOMIC DNA]</scope>
    <source>
        <strain>Berkeley</strain>
    </source>
</reference>
<reference key="2">
    <citation type="journal article" date="2002" name="Genome Biol.">
        <title>Annotation of the Drosophila melanogaster euchromatic genome: a systematic review.</title>
        <authorList>
            <person name="Misra S."/>
            <person name="Crosby M.A."/>
            <person name="Mungall C.J."/>
            <person name="Matthews B.B."/>
            <person name="Campbell K.S."/>
            <person name="Hradecky P."/>
            <person name="Huang Y."/>
            <person name="Kaminker J.S."/>
            <person name="Millburn G.H."/>
            <person name="Prochnik S.E."/>
            <person name="Smith C.D."/>
            <person name="Tupy J.L."/>
            <person name="Whitfield E.J."/>
            <person name="Bayraktaroglu L."/>
            <person name="Berman B.P."/>
            <person name="Bettencourt B.R."/>
            <person name="Celniker S.E."/>
            <person name="de Grey A.D.N.J."/>
            <person name="Drysdale R.A."/>
            <person name="Harris N.L."/>
            <person name="Richter J."/>
            <person name="Russo S."/>
            <person name="Schroeder A.J."/>
            <person name="Shu S.Q."/>
            <person name="Stapleton M."/>
            <person name="Yamada C."/>
            <person name="Ashburner M."/>
            <person name="Gelbart W.M."/>
            <person name="Rubin G.M."/>
            <person name="Lewis S.E."/>
        </authorList>
    </citation>
    <scope>GENOME REANNOTATION</scope>
    <source>
        <strain>Berkeley</strain>
    </source>
</reference>
<reference key="3">
    <citation type="submission" date="2006-01" db="EMBL/GenBank/DDBJ databases">
        <authorList>
            <person name="Stapleton M."/>
            <person name="Carlson J.W."/>
            <person name="Chavez C."/>
            <person name="Frise E."/>
            <person name="George R.A."/>
            <person name="Pacleb J.M."/>
            <person name="Park S."/>
            <person name="Wan K.H."/>
            <person name="Yu C."/>
            <person name="Celniker S.E."/>
        </authorList>
    </citation>
    <scope>NUCLEOTIDE SEQUENCE [LARGE SCALE MRNA]</scope>
    <source>
        <strain>Berkeley</strain>
    </source>
</reference>
<reference key="4">
    <citation type="journal article" date="2011" name="J. Neurosci.">
        <title>Similar odorants elicit different behavioral and physiological responses, some supersustained.</title>
        <authorList>
            <person name="Montague S.A."/>
            <person name="Mathew D."/>
            <person name="Carlson J.R."/>
        </authorList>
    </citation>
    <scope>FUNCTION</scope>
</reference>
<reference key="5">
    <citation type="journal article" date="2011" name="PLoS ONE">
        <title>Modeling peripheral olfactory coding in Drosophila larvae.</title>
        <authorList>
            <person name="Hoare D.J."/>
            <person name="Humble J."/>
            <person name="Jin D."/>
            <person name="Gilding N."/>
            <person name="Petersen R."/>
            <person name="Cobb M."/>
            <person name="McCrohan C."/>
        </authorList>
    </citation>
    <scope>FUNCTION</scope>
</reference>
<gene>
    <name type="primary">Or42a</name>
    <name type="ORF">CG17250</name>
</gene>
<keyword id="KW-1003">Cell membrane</keyword>
<keyword id="KW-0325">Glycoprotein</keyword>
<keyword id="KW-0472">Membrane</keyword>
<keyword id="KW-0552">Olfaction</keyword>
<keyword id="KW-0675">Receptor</keyword>
<keyword id="KW-1185">Reference proteome</keyword>
<keyword id="KW-0716">Sensory transduction</keyword>
<keyword id="KW-0807">Transducer</keyword>
<keyword id="KW-0812">Transmembrane</keyword>
<keyword id="KW-1133">Transmembrane helix</keyword>
<evidence type="ECO:0000250" key="1"/>
<evidence type="ECO:0000255" key="2"/>
<evidence type="ECO:0000269" key="3">
    <source>
    </source>
</evidence>
<evidence type="ECO:0000269" key="4">
    <source>
    </source>
</evidence>
<evidence type="ECO:0000305" key="5"/>
<name>OR42A_DROME</name>